<reference key="1">
    <citation type="journal article" date="2003" name="Nature">
        <title>Genome sequence of Bacillus cereus and comparative analysis with Bacillus anthracis.</title>
        <authorList>
            <person name="Ivanova N."/>
            <person name="Sorokin A."/>
            <person name="Anderson I."/>
            <person name="Galleron N."/>
            <person name="Candelon B."/>
            <person name="Kapatral V."/>
            <person name="Bhattacharyya A."/>
            <person name="Reznik G."/>
            <person name="Mikhailova N."/>
            <person name="Lapidus A."/>
            <person name="Chu L."/>
            <person name="Mazur M."/>
            <person name="Goltsman E."/>
            <person name="Larsen N."/>
            <person name="D'Souza M."/>
            <person name="Walunas T."/>
            <person name="Grechkin Y."/>
            <person name="Pusch G."/>
            <person name="Haselkorn R."/>
            <person name="Fonstein M."/>
            <person name="Ehrlich S.D."/>
            <person name="Overbeek R."/>
            <person name="Kyrpides N.C."/>
        </authorList>
    </citation>
    <scope>NUCLEOTIDE SEQUENCE [LARGE SCALE GENOMIC DNA]</scope>
    <source>
        <strain>ATCC 14579 / DSM 31 / CCUG 7414 / JCM 2152 / NBRC 15305 / NCIMB 9373 / NCTC 2599 / NRRL B-3711</strain>
    </source>
</reference>
<evidence type="ECO:0000255" key="1">
    <source>
        <dbReference type="HAMAP-Rule" id="MF_01713"/>
    </source>
</evidence>
<evidence type="ECO:0000305" key="2"/>
<accession>Q81A96</accession>
<keyword id="KW-0067">ATP-binding</keyword>
<keyword id="KW-1003">Cell membrane</keyword>
<keyword id="KW-0472">Membrane</keyword>
<keyword id="KW-0547">Nucleotide-binding</keyword>
<keyword id="KW-0918">Phosphonate transport</keyword>
<keyword id="KW-1185">Reference proteome</keyword>
<keyword id="KW-1278">Translocase</keyword>
<keyword id="KW-0813">Transport</keyword>
<feature type="chain" id="PRO_0000092690" description="Phosphonates import ATP-binding protein PhnC">
    <location>
        <begin position="1"/>
        <end position="257"/>
    </location>
</feature>
<feature type="domain" description="ABC transporter" evidence="1">
    <location>
        <begin position="2"/>
        <end position="246"/>
    </location>
</feature>
<feature type="binding site" evidence="1">
    <location>
        <begin position="35"/>
        <end position="42"/>
    </location>
    <ligand>
        <name>ATP</name>
        <dbReference type="ChEBI" id="CHEBI:30616"/>
    </ligand>
</feature>
<organism>
    <name type="scientific">Bacillus cereus (strain ATCC 14579 / DSM 31 / CCUG 7414 / JCM 2152 / NBRC 15305 / NCIMB 9373 / NCTC 2599 / NRRL B-3711)</name>
    <dbReference type="NCBI Taxonomy" id="226900"/>
    <lineage>
        <taxon>Bacteria</taxon>
        <taxon>Bacillati</taxon>
        <taxon>Bacillota</taxon>
        <taxon>Bacilli</taxon>
        <taxon>Bacillales</taxon>
        <taxon>Bacillaceae</taxon>
        <taxon>Bacillus</taxon>
        <taxon>Bacillus cereus group</taxon>
    </lineage>
</organism>
<dbReference type="EC" id="7.3.2.2" evidence="1"/>
<dbReference type="EMBL" id="AE016877">
    <property type="protein sequence ID" value="AAP10614.1"/>
    <property type="status" value="ALT_INIT"/>
    <property type="molecule type" value="Genomic_DNA"/>
</dbReference>
<dbReference type="RefSeq" id="NP_833413.1">
    <property type="nucleotide sequence ID" value="NC_004722.1"/>
</dbReference>
<dbReference type="RefSeq" id="WP_000569240.1">
    <property type="nucleotide sequence ID" value="NZ_CP138336.1"/>
</dbReference>
<dbReference type="SMR" id="Q81A96"/>
<dbReference type="STRING" id="226900.BC_3685"/>
<dbReference type="KEGG" id="bce:BC3685"/>
<dbReference type="PATRIC" id="fig|226900.8.peg.3790"/>
<dbReference type="HOGENOM" id="CLU_000604_1_22_9"/>
<dbReference type="OrthoDB" id="9802264at2"/>
<dbReference type="Proteomes" id="UP000001417">
    <property type="component" value="Chromosome"/>
</dbReference>
<dbReference type="GO" id="GO:0005886">
    <property type="term" value="C:plasma membrane"/>
    <property type="evidence" value="ECO:0007669"/>
    <property type="project" value="UniProtKB-SubCell"/>
</dbReference>
<dbReference type="GO" id="GO:0015416">
    <property type="term" value="F:ABC-type phosphonate transporter activity"/>
    <property type="evidence" value="ECO:0007669"/>
    <property type="project" value="UniProtKB-EC"/>
</dbReference>
<dbReference type="GO" id="GO:0005524">
    <property type="term" value="F:ATP binding"/>
    <property type="evidence" value="ECO:0007669"/>
    <property type="project" value="UniProtKB-KW"/>
</dbReference>
<dbReference type="GO" id="GO:0016887">
    <property type="term" value="F:ATP hydrolysis activity"/>
    <property type="evidence" value="ECO:0007669"/>
    <property type="project" value="InterPro"/>
</dbReference>
<dbReference type="CDD" id="cd03256">
    <property type="entry name" value="ABC_PhnC_transporter"/>
    <property type="match status" value="1"/>
</dbReference>
<dbReference type="FunFam" id="3.40.50.300:FF:001482">
    <property type="entry name" value="Phosphonates import ATP-binding protein PhnC"/>
    <property type="match status" value="1"/>
</dbReference>
<dbReference type="Gene3D" id="3.40.50.300">
    <property type="entry name" value="P-loop containing nucleotide triphosphate hydrolases"/>
    <property type="match status" value="1"/>
</dbReference>
<dbReference type="InterPro" id="IPR003593">
    <property type="entry name" value="AAA+_ATPase"/>
</dbReference>
<dbReference type="InterPro" id="IPR003439">
    <property type="entry name" value="ABC_transporter-like_ATP-bd"/>
</dbReference>
<dbReference type="InterPro" id="IPR017871">
    <property type="entry name" value="ABC_transporter-like_CS"/>
</dbReference>
<dbReference type="InterPro" id="IPR012693">
    <property type="entry name" value="ABC_transpr_PhnC"/>
</dbReference>
<dbReference type="InterPro" id="IPR050086">
    <property type="entry name" value="MetN_ABC_transporter-like"/>
</dbReference>
<dbReference type="InterPro" id="IPR027417">
    <property type="entry name" value="P-loop_NTPase"/>
</dbReference>
<dbReference type="NCBIfam" id="TIGR02315">
    <property type="entry name" value="ABC_phnC"/>
    <property type="match status" value="1"/>
</dbReference>
<dbReference type="PANTHER" id="PTHR43166">
    <property type="entry name" value="AMINO ACID IMPORT ATP-BINDING PROTEIN"/>
    <property type="match status" value="1"/>
</dbReference>
<dbReference type="PANTHER" id="PTHR43166:SF6">
    <property type="entry name" value="PHOSPHONATES IMPORT ATP-BINDING PROTEIN PHNC"/>
    <property type="match status" value="1"/>
</dbReference>
<dbReference type="Pfam" id="PF00005">
    <property type="entry name" value="ABC_tran"/>
    <property type="match status" value="1"/>
</dbReference>
<dbReference type="SMART" id="SM00382">
    <property type="entry name" value="AAA"/>
    <property type="match status" value="1"/>
</dbReference>
<dbReference type="SUPFAM" id="SSF52540">
    <property type="entry name" value="P-loop containing nucleoside triphosphate hydrolases"/>
    <property type="match status" value="1"/>
</dbReference>
<dbReference type="PROSITE" id="PS00211">
    <property type="entry name" value="ABC_TRANSPORTER_1"/>
    <property type="match status" value="1"/>
</dbReference>
<dbReference type="PROSITE" id="PS50893">
    <property type="entry name" value="ABC_TRANSPORTER_2"/>
    <property type="match status" value="1"/>
</dbReference>
<dbReference type="PROSITE" id="PS51249">
    <property type="entry name" value="PHNC"/>
    <property type="match status" value="1"/>
</dbReference>
<name>PHNC_BACCR</name>
<protein>
    <recommendedName>
        <fullName evidence="1">Phosphonates import ATP-binding protein PhnC</fullName>
        <ecNumber evidence="1">7.3.2.2</ecNumber>
    </recommendedName>
</protein>
<proteinExistence type="inferred from homology"/>
<comment type="function">
    <text evidence="1">Part of the ABC transporter complex PhnCDE involved in phosphonates import. Responsible for energy coupling to the transport system.</text>
</comment>
<comment type="catalytic activity">
    <reaction evidence="1">
        <text>phosphonate(out) + ATP + H2O = phosphonate(in) + ADP + phosphate + H(+)</text>
        <dbReference type="Rhea" id="RHEA:18065"/>
        <dbReference type="ChEBI" id="CHEBI:15377"/>
        <dbReference type="ChEBI" id="CHEBI:15378"/>
        <dbReference type="ChEBI" id="CHEBI:16215"/>
        <dbReference type="ChEBI" id="CHEBI:30616"/>
        <dbReference type="ChEBI" id="CHEBI:43474"/>
        <dbReference type="ChEBI" id="CHEBI:456216"/>
        <dbReference type="EC" id="7.3.2.2"/>
    </reaction>
</comment>
<comment type="subunit">
    <text evidence="1">The complex is composed of two ATP-binding proteins (PhnC), two transmembrane proteins (PhnE) and a solute-binding protein (PhnD).</text>
</comment>
<comment type="subcellular location">
    <subcellularLocation>
        <location evidence="1">Cell membrane</location>
        <topology evidence="1">Peripheral membrane protein</topology>
    </subcellularLocation>
</comment>
<comment type="similarity">
    <text evidence="1">Belongs to the ABC transporter superfamily. Phosphonates importer (TC 3.A.1.9.1) family.</text>
</comment>
<comment type="sequence caution" evidence="2">
    <conflict type="erroneous initiation">
        <sequence resource="EMBL-CDS" id="AAP10614"/>
    </conflict>
</comment>
<sequence>MIEFRNVSKVYPNGTKGLNNINLKIQKGEFVIMVGLSGAGKSTLLKSVNRLHEITEGEIMIECESITAAKGKDLRRMRRDIGMIFQSFNLVKRSTVLKNVLAGRVGYHSTLRTTLGLFPKEDVELAFQALKRVNILEKAYARADELSGGQQQRVSIARALAQEAKIILADEPVASLDPLTTKQVLDDLKKINEDFGITTIVNLHSIALARQYATRIIGLHAGEIVFDGLVEAATDEKFAEIYGDVAQKSELLEVAAK</sequence>
<gene>
    <name evidence="1" type="primary">phnC</name>
    <name type="ordered locus">BC_3685</name>
</gene>